<proteinExistence type="inferred from homology"/>
<name>PURL_METS3</name>
<dbReference type="EC" id="6.3.5.3" evidence="1"/>
<dbReference type="EMBL" id="CP000678">
    <property type="protein sequence ID" value="ABQ87547.1"/>
    <property type="molecule type" value="Genomic_DNA"/>
</dbReference>
<dbReference type="RefSeq" id="WP_011954455.1">
    <property type="nucleotide sequence ID" value="NZ_CP117965.1"/>
</dbReference>
<dbReference type="SMR" id="A5UMW9"/>
<dbReference type="STRING" id="420247.Msm_1342"/>
<dbReference type="EnsemblBacteria" id="ABQ87547">
    <property type="protein sequence ID" value="ABQ87547"/>
    <property type="gene ID" value="Msm_1342"/>
</dbReference>
<dbReference type="GeneID" id="78817993"/>
<dbReference type="KEGG" id="msi:Msm_1342"/>
<dbReference type="PATRIC" id="fig|420247.28.peg.1337"/>
<dbReference type="eggNOG" id="arCOG00641">
    <property type="taxonomic scope" value="Archaea"/>
</dbReference>
<dbReference type="HOGENOM" id="CLU_003100_0_1_2"/>
<dbReference type="UniPathway" id="UPA00074">
    <property type="reaction ID" value="UER00128"/>
</dbReference>
<dbReference type="Proteomes" id="UP000001992">
    <property type="component" value="Chromosome"/>
</dbReference>
<dbReference type="GO" id="GO:0005737">
    <property type="term" value="C:cytoplasm"/>
    <property type="evidence" value="ECO:0007669"/>
    <property type="project" value="UniProtKB-SubCell"/>
</dbReference>
<dbReference type="GO" id="GO:0005524">
    <property type="term" value="F:ATP binding"/>
    <property type="evidence" value="ECO:0007669"/>
    <property type="project" value="UniProtKB-UniRule"/>
</dbReference>
<dbReference type="GO" id="GO:0000287">
    <property type="term" value="F:magnesium ion binding"/>
    <property type="evidence" value="ECO:0007669"/>
    <property type="project" value="UniProtKB-UniRule"/>
</dbReference>
<dbReference type="GO" id="GO:0004642">
    <property type="term" value="F:phosphoribosylformylglycinamidine synthase activity"/>
    <property type="evidence" value="ECO:0007669"/>
    <property type="project" value="UniProtKB-UniRule"/>
</dbReference>
<dbReference type="GO" id="GO:0006189">
    <property type="term" value="P:'de novo' IMP biosynthetic process"/>
    <property type="evidence" value="ECO:0007669"/>
    <property type="project" value="UniProtKB-UniRule"/>
</dbReference>
<dbReference type="CDD" id="cd02203">
    <property type="entry name" value="PurL_repeat1"/>
    <property type="match status" value="1"/>
</dbReference>
<dbReference type="CDD" id="cd02204">
    <property type="entry name" value="PurL_repeat2"/>
    <property type="match status" value="1"/>
</dbReference>
<dbReference type="FunFam" id="3.30.1330.10:FF:000004">
    <property type="entry name" value="Phosphoribosylformylglycinamidine synthase subunit PurL"/>
    <property type="match status" value="1"/>
</dbReference>
<dbReference type="Gene3D" id="3.90.650.10">
    <property type="entry name" value="PurM-like C-terminal domain"/>
    <property type="match status" value="2"/>
</dbReference>
<dbReference type="Gene3D" id="3.30.1330.10">
    <property type="entry name" value="PurM-like, N-terminal domain"/>
    <property type="match status" value="2"/>
</dbReference>
<dbReference type="HAMAP" id="MF_00420">
    <property type="entry name" value="PurL_2"/>
    <property type="match status" value="1"/>
</dbReference>
<dbReference type="InterPro" id="IPR010074">
    <property type="entry name" value="PRibForGlyAmidine_synth_PurL"/>
</dbReference>
<dbReference type="InterPro" id="IPR041609">
    <property type="entry name" value="PurL_linker"/>
</dbReference>
<dbReference type="InterPro" id="IPR010918">
    <property type="entry name" value="PurM-like_C_dom"/>
</dbReference>
<dbReference type="InterPro" id="IPR036676">
    <property type="entry name" value="PurM-like_C_sf"/>
</dbReference>
<dbReference type="InterPro" id="IPR016188">
    <property type="entry name" value="PurM-like_N"/>
</dbReference>
<dbReference type="InterPro" id="IPR036921">
    <property type="entry name" value="PurM-like_N_sf"/>
</dbReference>
<dbReference type="NCBIfam" id="TIGR01736">
    <property type="entry name" value="FGAM_synth_II"/>
    <property type="match status" value="1"/>
</dbReference>
<dbReference type="NCBIfam" id="NF002290">
    <property type="entry name" value="PRK01213.1"/>
    <property type="match status" value="1"/>
</dbReference>
<dbReference type="PANTHER" id="PTHR43555">
    <property type="entry name" value="PHOSPHORIBOSYLFORMYLGLYCINAMIDINE SYNTHASE SUBUNIT PURL"/>
    <property type="match status" value="1"/>
</dbReference>
<dbReference type="PANTHER" id="PTHR43555:SF1">
    <property type="entry name" value="PHOSPHORIBOSYLFORMYLGLYCINAMIDINE SYNTHASE SUBUNIT PURL"/>
    <property type="match status" value="1"/>
</dbReference>
<dbReference type="Pfam" id="PF00586">
    <property type="entry name" value="AIRS"/>
    <property type="match status" value="2"/>
</dbReference>
<dbReference type="Pfam" id="PF02769">
    <property type="entry name" value="AIRS_C"/>
    <property type="match status" value="2"/>
</dbReference>
<dbReference type="Pfam" id="PF18072">
    <property type="entry name" value="FGAR-AT_linker"/>
    <property type="match status" value="1"/>
</dbReference>
<dbReference type="PIRSF" id="PIRSF001587">
    <property type="entry name" value="FGAM_synthase_II"/>
    <property type="match status" value="1"/>
</dbReference>
<dbReference type="SUPFAM" id="SSF56042">
    <property type="entry name" value="PurM C-terminal domain-like"/>
    <property type="match status" value="2"/>
</dbReference>
<dbReference type="SUPFAM" id="SSF55326">
    <property type="entry name" value="PurM N-terminal domain-like"/>
    <property type="match status" value="2"/>
</dbReference>
<keyword id="KW-0067">ATP-binding</keyword>
<keyword id="KW-0963">Cytoplasm</keyword>
<keyword id="KW-0436">Ligase</keyword>
<keyword id="KW-0460">Magnesium</keyword>
<keyword id="KW-0479">Metal-binding</keyword>
<keyword id="KW-0547">Nucleotide-binding</keyword>
<keyword id="KW-0658">Purine biosynthesis</keyword>
<feature type="chain" id="PRO_1000050321" description="Phosphoribosylformylglycinamidine synthase subunit PurL">
    <location>
        <begin position="1"/>
        <end position="716"/>
    </location>
</feature>
<feature type="active site" evidence="1">
    <location>
        <position position="34"/>
    </location>
</feature>
<feature type="active site" description="Proton acceptor" evidence="1">
    <location>
        <position position="80"/>
    </location>
</feature>
<feature type="binding site" evidence="1">
    <location>
        <position position="37"/>
    </location>
    <ligand>
        <name>ATP</name>
        <dbReference type="ChEBI" id="CHEBI:30616"/>
    </ligand>
</feature>
<feature type="binding site" evidence="1">
    <location>
        <position position="78"/>
    </location>
    <ligand>
        <name>Mg(2+)</name>
        <dbReference type="ChEBI" id="CHEBI:18420"/>
        <label>1</label>
    </ligand>
</feature>
<feature type="binding site" evidence="1">
    <location>
        <begin position="79"/>
        <end position="82"/>
    </location>
    <ligand>
        <name>substrate</name>
    </ligand>
</feature>
<feature type="binding site" evidence="1">
    <location>
        <position position="101"/>
    </location>
    <ligand>
        <name>substrate</name>
    </ligand>
</feature>
<feature type="binding site" evidence="1">
    <location>
        <position position="102"/>
    </location>
    <ligand>
        <name>Mg(2+)</name>
        <dbReference type="ChEBI" id="CHEBI:18420"/>
        <label>2</label>
    </ligand>
</feature>
<feature type="binding site" evidence="1">
    <location>
        <position position="226"/>
    </location>
    <ligand>
        <name>substrate</name>
    </ligand>
</feature>
<feature type="binding site" evidence="1">
    <location>
        <position position="254"/>
    </location>
    <ligand>
        <name>Mg(2+)</name>
        <dbReference type="ChEBI" id="CHEBI:18420"/>
        <label>2</label>
    </ligand>
</feature>
<feature type="binding site" evidence="1">
    <location>
        <begin position="298"/>
        <end position="300"/>
    </location>
    <ligand>
        <name>substrate</name>
    </ligand>
</feature>
<feature type="binding site" evidence="1">
    <location>
        <position position="474"/>
    </location>
    <ligand>
        <name>ATP</name>
        <dbReference type="ChEBI" id="CHEBI:30616"/>
    </ligand>
</feature>
<feature type="binding site" evidence="1">
    <location>
        <position position="511"/>
    </location>
    <ligand>
        <name>ATP</name>
        <dbReference type="ChEBI" id="CHEBI:30616"/>
    </ligand>
</feature>
<feature type="binding site" evidence="1">
    <location>
        <position position="512"/>
    </location>
    <ligand>
        <name>Mg(2+)</name>
        <dbReference type="ChEBI" id="CHEBI:18420"/>
        <label>1</label>
    </ligand>
</feature>
<feature type="binding site" evidence="1">
    <location>
        <position position="514"/>
    </location>
    <ligand>
        <name>substrate</name>
    </ligand>
</feature>
<accession>A5UMW9</accession>
<protein>
    <recommendedName>
        <fullName evidence="1">Phosphoribosylformylglycinamidine synthase subunit PurL</fullName>
        <shortName evidence="1">FGAM synthase</shortName>
        <ecNumber evidence="1">6.3.5.3</ecNumber>
    </recommendedName>
    <alternativeName>
        <fullName evidence="1">Formylglycinamide ribonucleotide amidotransferase subunit II</fullName>
        <shortName evidence="1">FGAR amidotransferase II</shortName>
        <shortName evidence="1">FGAR-AT II</shortName>
    </alternativeName>
    <alternativeName>
        <fullName evidence="1">Glutamine amidotransferase PurL</fullName>
    </alternativeName>
    <alternativeName>
        <fullName evidence="1">Phosphoribosylformylglycinamidine synthase subunit II</fullName>
    </alternativeName>
</protein>
<gene>
    <name evidence="1" type="primary">purL</name>
    <name type="ordered locus">Msm_1342</name>
</gene>
<reference key="1">
    <citation type="journal article" date="2007" name="Proc. Natl. Acad. Sci. U.S.A.">
        <title>Genomic and metabolic adaptations of Methanobrevibacter smithii to the human gut.</title>
        <authorList>
            <person name="Samuel B.S."/>
            <person name="Hansen E.E."/>
            <person name="Manchester J.K."/>
            <person name="Coutinho P.M."/>
            <person name="Henrissat B."/>
            <person name="Fulton R."/>
            <person name="Latreille P."/>
            <person name="Kim K."/>
            <person name="Wilson R.K."/>
            <person name="Gordon J.I."/>
        </authorList>
    </citation>
    <scope>NUCLEOTIDE SEQUENCE [LARGE SCALE GENOMIC DNA]</scope>
    <source>
        <strain>ATCC 35061 / DSM 861 / OCM 144 / PS</strain>
    </source>
</reference>
<organism>
    <name type="scientific">Methanobrevibacter smithii (strain ATCC 35061 / DSM 861 / OCM 144 / PS)</name>
    <dbReference type="NCBI Taxonomy" id="420247"/>
    <lineage>
        <taxon>Archaea</taxon>
        <taxon>Methanobacteriati</taxon>
        <taxon>Methanobacteriota</taxon>
        <taxon>Methanomada group</taxon>
        <taxon>Methanobacteria</taxon>
        <taxon>Methanobacteriales</taxon>
        <taxon>Methanobacteriaceae</taxon>
        <taxon>Methanobrevibacter</taxon>
    </lineage>
</organism>
<comment type="function">
    <text evidence="1">Part of the phosphoribosylformylglycinamidine synthase complex involved in the purines biosynthetic pathway. Catalyzes the ATP-dependent conversion of formylglycinamide ribonucleotide (FGAR) and glutamine to yield formylglycinamidine ribonucleotide (FGAM) and glutamate. The FGAM synthase complex is composed of three subunits. PurQ produces an ammonia molecule by converting glutamine to glutamate. PurL transfers the ammonia molecule to FGAR to form FGAM in an ATP-dependent manner. PurS interacts with PurQ and PurL and is thought to assist in the transfer of the ammonia molecule from PurQ to PurL.</text>
</comment>
<comment type="catalytic activity">
    <reaction evidence="1">
        <text>N(2)-formyl-N(1)-(5-phospho-beta-D-ribosyl)glycinamide + L-glutamine + ATP + H2O = 2-formamido-N(1)-(5-O-phospho-beta-D-ribosyl)acetamidine + L-glutamate + ADP + phosphate + H(+)</text>
        <dbReference type="Rhea" id="RHEA:17129"/>
        <dbReference type="ChEBI" id="CHEBI:15377"/>
        <dbReference type="ChEBI" id="CHEBI:15378"/>
        <dbReference type="ChEBI" id="CHEBI:29985"/>
        <dbReference type="ChEBI" id="CHEBI:30616"/>
        <dbReference type="ChEBI" id="CHEBI:43474"/>
        <dbReference type="ChEBI" id="CHEBI:58359"/>
        <dbReference type="ChEBI" id="CHEBI:147286"/>
        <dbReference type="ChEBI" id="CHEBI:147287"/>
        <dbReference type="ChEBI" id="CHEBI:456216"/>
        <dbReference type="EC" id="6.3.5.3"/>
    </reaction>
</comment>
<comment type="pathway">
    <text evidence="1">Purine metabolism; IMP biosynthesis via de novo pathway; 5-amino-1-(5-phospho-D-ribosyl)imidazole from N(2)-formyl-N(1)-(5-phospho-D-ribosyl)glycinamide: step 1/2.</text>
</comment>
<comment type="subunit">
    <text evidence="1">Monomer. Part of the FGAM synthase complex composed of 1 PurL, 1 PurQ and 2 PurS subunits.</text>
</comment>
<comment type="subcellular location">
    <subcellularLocation>
        <location evidence="1">Cytoplasm</location>
    </subcellularLocation>
</comment>
<comment type="similarity">
    <text evidence="1">Belongs to the FGAMS family.</text>
</comment>
<sequence length="716" mass="77739">MTLTDSEMEYIEGILGRKMNELEEGMLDVMFSEHCSYKSSRPILGTFPTEGENIILGPGDDAGLVSVTDKYALAVGMESHNHPSAIEPYGGAGTGIGGILRDIISMGARPIALLDSLRFGSLDDEKSKYLFEHVVEGISDYGNRVGVPTVAGEVEFDDSFRTNPLVNVMCVGLVEKDKIVRGKAPYVGDVFLLMGGTTGRDGIHGVTFASEELTSDSETEDRPAVQVADPFTKKRVLEASLEILDEINVSGVKDLGGGGLTCCISELVDESNNGARVDLRNIPLRETGMTPYEIMLSESQERMVFVINPKDVKKAQEICDKHEIVSAVIGEVIDGNNMIIDDEGSSLADLPTILLADPPSLNRELKEIAEDTSKVEVDHPPVRQSLLELLSSPNIASKQWVYKQYDHEVQVRTVVKPGDDAAVLRIDDDTAIALTTDANTIHTKLSPFDGGAGCVAEAIRNVISMGATPYAVVDCLNFGNPETPEILWQFKRTIEGMSLVAENFNAPVISGNVSFYNETEGIKINPTPAVGVIGVENIENIRTMDFKNSGDKILLIGTTYDEVTGSEYHRTIHNIEKGMAPRIRIEDELANGKTILKLLDEDSSKNITAVHDVSHGGLAVALSEMVMKGNIGCEIDLDSIITSEDLEESDLIYSESHGRYIITVNADAVDEILNKIDVPVAIIGEVKGAVLKLGDNEFTIDELNDSYHGVIEKYMA</sequence>
<evidence type="ECO:0000255" key="1">
    <source>
        <dbReference type="HAMAP-Rule" id="MF_00420"/>
    </source>
</evidence>